<feature type="propeptide" id="PRO_0000457003" evidence="7">
    <location>
        <begin position="1"/>
        <end position="34"/>
    </location>
</feature>
<feature type="peptide" id="PRO_0000388774" description="Phosphatase RapH inhibitor" evidence="5">
    <location>
        <begin position="35"/>
        <end position="40"/>
    </location>
</feature>
<feature type="propeptide" id="PRO_0000457004" evidence="7">
    <location>
        <begin position="41"/>
        <end position="57"/>
    </location>
</feature>
<feature type="region of interest" description="Disordered" evidence="2">
    <location>
        <begin position="26"/>
        <end position="57"/>
    </location>
</feature>
<feature type="mutagenesis site" description="Small decrease in activity." evidence="5">
    <original>E</original>
    <variation>A</variation>
    <location>
        <position position="33"/>
    </location>
</feature>
<feature type="mutagenesis site" description="Small decrease in activity." evidence="5">
    <original>S</original>
    <variation>A</variation>
    <location>
        <position position="34"/>
    </location>
</feature>
<feature type="mutagenesis site" description="Loss of activity." evidence="5">
    <original>T</original>
    <variation>A</variation>
    <location>
        <position position="35"/>
    </location>
</feature>
<feature type="mutagenesis site" description="Loss of activity." evidence="5">
    <original>D</original>
    <variation>A</variation>
    <location>
        <position position="36"/>
    </location>
</feature>
<feature type="mutagenesis site" description="Loss of activity." evidence="5">
    <original>R</original>
    <variation>A</variation>
    <location>
        <position position="37"/>
    </location>
</feature>
<feature type="mutagenesis site" description="Loss of activity." evidence="5">
    <original>N</original>
    <variation>A</variation>
    <location>
        <position position="38"/>
    </location>
</feature>
<feature type="mutagenesis site" description="Retains 10% of wild-type activity." evidence="5">
    <original>T</original>
    <variation>A</variation>
    <location>
        <position position="39"/>
    </location>
</feature>
<feature type="mutagenesis site" description="Retains less than 10% of wild-type activity." evidence="5">
    <original>T</original>
    <variation>A</variation>
    <location>
        <position position="40"/>
    </location>
</feature>
<feature type="mutagenesis site" description="Retains 10% of wild-type activity." evidence="5">
    <original>Y</original>
    <variation>A</variation>
    <location>
        <position position="41"/>
    </location>
</feature>
<feature type="mutagenesis site" description="Small decrease in activity." evidence="5">
    <original>I</original>
    <variation>A</variation>
    <location>
        <position position="42"/>
    </location>
</feature>
<feature type="mutagenesis site" description="Decrease in activity." evidence="5">
    <original>H</original>
    <variation>A</variation>
    <location>
        <position position="44"/>
    </location>
</feature>
<feature type="mutagenesis site" description="Decrease in activity." evidence="5">
    <original>K</original>
    <variation>A</variation>
    <location>
        <position position="48"/>
    </location>
</feature>
<feature type="mutagenesis site" description="Decrease in activity." evidence="5">
    <original>K</original>
    <variation>A</variation>
    <location>
        <position position="54"/>
    </location>
</feature>
<feature type="sequence conflict" description="In Ref. 4; AAA22831." evidence="6" ref="4">
    <original>RNTTYIDH</original>
    <variation>PLESTAQA</variation>
    <location>
        <begin position="37"/>
        <end position="44"/>
    </location>
</feature>
<name>PHRH_BACSU</name>
<dbReference type="EMBL" id="AB207815">
    <property type="protein sequence ID" value="BAD91218.1"/>
    <property type="molecule type" value="Genomic_DNA"/>
</dbReference>
<dbReference type="EMBL" id="AL009126">
    <property type="protein sequence ID" value="CAX52580.1"/>
    <property type="molecule type" value="Genomic_DNA"/>
</dbReference>
<dbReference type="EMBL" id="M22915">
    <property type="protein sequence ID" value="AAA22831.1"/>
    <property type="molecule type" value="Genomic_DNA"/>
</dbReference>
<dbReference type="RefSeq" id="WP_003242557.1">
    <property type="nucleotide sequence ID" value="NZ_OZ025638.1"/>
</dbReference>
<dbReference type="RefSeq" id="YP_003097693.1">
    <property type="nucleotide sequence ID" value="NC_000964.3"/>
</dbReference>
<dbReference type="FunCoup" id="Q59HN7">
    <property type="interactions" value="91"/>
</dbReference>
<dbReference type="STRING" id="224308.BSU06839"/>
<dbReference type="PaxDb" id="224308-BSU06839"/>
<dbReference type="EnsemblBacteria" id="CAX52580">
    <property type="protein sequence ID" value="CAX52580"/>
    <property type="gene ID" value="BSU_06839"/>
</dbReference>
<dbReference type="GeneID" id="8303115"/>
<dbReference type="KEGG" id="bsu:BSU06839"/>
<dbReference type="PATRIC" id="fig|224308.179.peg.743"/>
<dbReference type="InParanoid" id="Q59HN7"/>
<dbReference type="OrthoDB" id="2900693at2"/>
<dbReference type="BioCyc" id="BSUB:BSU06839-MONOMER"/>
<dbReference type="Proteomes" id="UP000001570">
    <property type="component" value="Chromosome"/>
</dbReference>
<dbReference type="GO" id="GO:0005737">
    <property type="term" value="C:cytoplasm"/>
    <property type="evidence" value="ECO:0007669"/>
    <property type="project" value="UniProtKB-SubCell"/>
</dbReference>
<dbReference type="GO" id="GO:0005576">
    <property type="term" value="C:extracellular region"/>
    <property type="evidence" value="ECO:0007669"/>
    <property type="project" value="UniProtKB-SubCell"/>
</dbReference>
<dbReference type="GO" id="GO:0030420">
    <property type="term" value="P:establishment of competence for transformation"/>
    <property type="evidence" value="ECO:0007669"/>
    <property type="project" value="UniProtKB-KW"/>
</dbReference>
<dbReference type="GO" id="GO:0030435">
    <property type="term" value="P:sporulation resulting in formation of a cellular spore"/>
    <property type="evidence" value="ECO:0007669"/>
    <property type="project" value="UniProtKB-KW"/>
</dbReference>
<evidence type="ECO:0000250" key="1">
    <source>
        <dbReference type="UniProtKB" id="P94416"/>
    </source>
</evidence>
<evidence type="ECO:0000256" key="2">
    <source>
        <dbReference type="SAM" id="MobiDB-lite"/>
    </source>
</evidence>
<evidence type="ECO:0000269" key="3">
    <source>
    </source>
</evidence>
<evidence type="ECO:0000269" key="4">
    <source>
    </source>
</evidence>
<evidence type="ECO:0000269" key="5">
    <source>
    </source>
</evidence>
<evidence type="ECO:0000305" key="6"/>
<evidence type="ECO:0000305" key="7">
    <source>
    </source>
</evidence>
<protein>
    <recommendedName>
        <fullName evidence="6">Phosphatase RapH inhibitor</fullName>
    </recommendedName>
    <alternativeName>
        <fullName>Phosphatase regulator H</fullName>
    </alternativeName>
</protein>
<comment type="function">
    <text evidence="4 5">Signaling molecule involved the regulation of both sporulation and competence (PubMed:17581123, PubMed:21908671). Secreted during production, but the mature peptide acts intracellularly, indicating that it needs to be imported into the cell to function (PubMed:21908671). Acts by inhibiting RapH activity (PubMed:17581123, PubMed:21908671). Can inhibit both RapH activities, the dephosphorylation of Spo0F and the sequestration of ComA (PubMed:21908671).</text>
</comment>
<comment type="subcellular location">
    <subcellularLocation>
        <location evidence="5">Secreted</location>
    </subcellularLocation>
    <subcellularLocation>
        <location evidence="5">Cytoplasm</location>
    </subcellularLocation>
    <text evidence="5 7">Peptides are secreted by the bacterium, and are then actively transported into the cell where they interact with intracellular receptors to regulate gene expression (Probable). Probably transported into the cell by the Opp (Spo0K) oligopeptide permease (PubMed:21908671).</text>
</comment>
<comment type="induction">
    <text evidence="5">Part of the rapH-phrH operon, which is transcribed from the SigA-driven rapH promoter (PubMed:21908671). phrH is also transcribed from a putative SigA-driven promoter embedded within the rapH gene sequence (PubMed:21908671).</text>
</comment>
<comment type="PTM">
    <text evidence="1">Contains a predicted signal peptide cleavage site in the N-terminal region, however the propeptide is probably only subject to processing events at the ends of the mature peptide.</text>
</comment>
<comment type="disruption phenotype">
    <text evidence="3">Decreases expression from the aprE promoter.</text>
</comment>
<comment type="similarity">
    <text evidence="6">Belongs to the Phr family.</text>
</comment>
<reference key="1">
    <citation type="journal article" date="2006" name="Mol. Microbiol.">
        <title>Bacillus subtilis RghR (YvaN) represses rapG and rapH, which encode inhibitors of expression of the srfA operon.</title>
        <authorList>
            <person name="Hayashi K."/>
            <person name="Kensuke T."/>
            <person name="Kobayashi K."/>
            <person name="Ogasawara N."/>
            <person name="Ogura M."/>
        </authorList>
    </citation>
    <scope>NUCLEOTIDE SEQUENCE [GENOMIC DNA]</scope>
    <scope>DISRUPTION PHENOTYPE</scope>
    <source>
        <strain>168</strain>
    </source>
</reference>
<reference key="2">
    <citation type="journal article" date="1997" name="Nature">
        <title>The complete genome sequence of the Gram-positive bacterium Bacillus subtilis.</title>
        <authorList>
            <person name="Kunst F."/>
            <person name="Ogasawara N."/>
            <person name="Moszer I."/>
            <person name="Albertini A.M."/>
            <person name="Alloni G."/>
            <person name="Azevedo V."/>
            <person name="Bertero M.G."/>
            <person name="Bessieres P."/>
            <person name="Bolotin A."/>
            <person name="Borchert S."/>
            <person name="Borriss R."/>
            <person name="Boursier L."/>
            <person name="Brans A."/>
            <person name="Braun M."/>
            <person name="Brignell S.C."/>
            <person name="Bron S."/>
            <person name="Brouillet S."/>
            <person name="Bruschi C.V."/>
            <person name="Caldwell B."/>
            <person name="Capuano V."/>
            <person name="Carter N.M."/>
            <person name="Choi S.-K."/>
            <person name="Codani J.-J."/>
            <person name="Connerton I.F."/>
            <person name="Cummings N.J."/>
            <person name="Daniel R.A."/>
            <person name="Denizot F."/>
            <person name="Devine K.M."/>
            <person name="Duesterhoeft A."/>
            <person name="Ehrlich S.D."/>
            <person name="Emmerson P.T."/>
            <person name="Entian K.-D."/>
            <person name="Errington J."/>
            <person name="Fabret C."/>
            <person name="Ferrari E."/>
            <person name="Foulger D."/>
            <person name="Fritz C."/>
            <person name="Fujita M."/>
            <person name="Fujita Y."/>
            <person name="Fuma S."/>
            <person name="Galizzi A."/>
            <person name="Galleron N."/>
            <person name="Ghim S.-Y."/>
            <person name="Glaser P."/>
            <person name="Goffeau A."/>
            <person name="Golightly E.J."/>
            <person name="Grandi G."/>
            <person name="Guiseppi G."/>
            <person name="Guy B.J."/>
            <person name="Haga K."/>
            <person name="Haiech J."/>
            <person name="Harwood C.R."/>
            <person name="Henaut A."/>
            <person name="Hilbert H."/>
            <person name="Holsappel S."/>
            <person name="Hosono S."/>
            <person name="Hullo M.-F."/>
            <person name="Itaya M."/>
            <person name="Jones L.-M."/>
            <person name="Joris B."/>
            <person name="Karamata D."/>
            <person name="Kasahara Y."/>
            <person name="Klaerr-Blanchard M."/>
            <person name="Klein C."/>
            <person name="Kobayashi Y."/>
            <person name="Koetter P."/>
            <person name="Koningstein G."/>
            <person name="Krogh S."/>
            <person name="Kumano M."/>
            <person name="Kurita K."/>
            <person name="Lapidus A."/>
            <person name="Lardinois S."/>
            <person name="Lauber J."/>
            <person name="Lazarevic V."/>
            <person name="Lee S.-M."/>
            <person name="Levine A."/>
            <person name="Liu H."/>
            <person name="Masuda S."/>
            <person name="Mauel C."/>
            <person name="Medigue C."/>
            <person name="Medina N."/>
            <person name="Mellado R.P."/>
            <person name="Mizuno M."/>
            <person name="Moestl D."/>
            <person name="Nakai S."/>
            <person name="Noback M."/>
            <person name="Noone D."/>
            <person name="O'Reilly M."/>
            <person name="Ogawa K."/>
            <person name="Ogiwara A."/>
            <person name="Oudega B."/>
            <person name="Park S.-H."/>
            <person name="Parro V."/>
            <person name="Pohl T.M."/>
            <person name="Portetelle D."/>
            <person name="Porwollik S."/>
            <person name="Prescott A.M."/>
            <person name="Presecan E."/>
            <person name="Pujic P."/>
            <person name="Purnelle B."/>
            <person name="Rapoport G."/>
            <person name="Rey M."/>
            <person name="Reynolds S."/>
            <person name="Rieger M."/>
            <person name="Rivolta C."/>
            <person name="Rocha E."/>
            <person name="Roche B."/>
            <person name="Rose M."/>
            <person name="Sadaie Y."/>
            <person name="Sato T."/>
            <person name="Scanlan E."/>
            <person name="Schleich S."/>
            <person name="Schroeter R."/>
            <person name="Scoffone F."/>
            <person name="Sekiguchi J."/>
            <person name="Sekowska A."/>
            <person name="Seror S.J."/>
            <person name="Serror P."/>
            <person name="Shin B.-S."/>
            <person name="Soldo B."/>
            <person name="Sorokin A."/>
            <person name="Tacconi E."/>
            <person name="Takagi T."/>
            <person name="Takahashi H."/>
            <person name="Takemaru K."/>
            <person name="Takeuchi M."/>
            <person name="Tamakoshi A."/>
            <person name="Tanaka T."/>
            <person name="Terpstra P."/>
            <person name="Tognoni A."/>
            <person name="Tosato V."/>
            <person name="Uchiyama S."/>
            <person name="Vandenbol M."/>
            <person name="Vannier F."/>
            <person name="Vassarotti A."/>
            <person name="Viari A."/>
            <person name="Wambutt R."/>
            <person name="Wedler E."/>
            <person name="Wedler H."/>
            <person name="Weitzenegger T."/>
            <person name="Winters P."/>
            <person name="Wipat A."/>
            <person name="Yamamoto H."/>
            <person name="Yamane K."/>
            <person name="Yasumoto K."/>
            <person name="Yata K."/>
            <person name="Yoshida K."/>
            <person name="Yoshikawa H.-F."/>
            <person name="Zumstein E."/>
            <person name="Yoshikawa H."/>
            <person name="Danchin A."/>
        </authorList>
    </citation>
    <scope>NUCLEOTIDE SEQUENCE [LARGE SCALE GENOMIC DNA]</scope>
    <source>
        <strain>168</strain>
    </source>
</reference>
<reference key="3">
    <citation type="journal article" date="2009" name="Microbiology">
        <title>From a consortium sequence to a unified sequence: the Bacillus subtilis 168 reference genome a decade later.</title>
        <authorList>
            <person name="Barbe V."/>
            <person name="Cruveiller S."/>
            <person name="Kunst F."/>
            <person name="Lenoble P."/>
            <person name="Meurice G."/>
            <person name="Sekowska A."/>
            <person name="Vallenet D."/>
            <person name="Wang T."/>
            <person name="Moszer I."/>
            <person name="Medigue C."/>
            <person name="Danchin A."/>
        </authorList>
    </citation>
    <scope>IDENTIFICATION</scope>
</reference>
<reference key="4">
    <citation type="journal article" date="1988" name="Gene">
        <title>Characterization of signal-sequence-coding regions selected from the Bacillus subtilis chromosome.</title>
        <authorList>
            <person name="Smith H."/>
            <person name="de Jong A."/>
            <person name="Bron S."/>
            <person name="Venema G."/>
        </authorList>
    </citation>
    <scope>NUCLEOTIDE SEQUENCE [GENOMIC DNA] OF 1-44</scope>
</reference>
<reference key="5">
    <citation type="journal article" date="2007" name="Mol. Microbiol.">
        <title>Temporal separation of distinct differentiation pathways by a dual specificity Rap-Phr system in Bacillus subtilis.</title>
        <authorList>
            <person name="Smits W.K."/>
            <person name="Bongiorni C."/>
            <person name="Veening J.W."/>
            <person name="Hamoen L.W."/>
            <person name="Kuipers O.P."/>
            <person name="Perego M."/>
        </authorList>
    </citation>
    <scope>FUNCTION</scope>
</reference>
<reference key="6">
    <citation type="journal article" date="2011" name="J. Bacteriol.">
        <title>An atypical Phr peptide regulates the developmental switch protein RapH.</title>
        <authorList>
            <person name="Mirouze N."/>
            <person name="Parashar V."/>
            <person name="Baker M.D."/>
            <person name="Dubnau D.A."/>
            <person name="Neiditch M.B."/>
        </authorList>
    </citation>
    <scope>FUNCTION</scope>
    <scope>SUBCELLULAR LOCATION</scope>
    <scope>INDUCTION</scope>
    <scope>MUTAGENESIS OF GLU-33; SER-34; THR-35; ASP-36; ARG-37; ASN-38; THR-39; THR-40; TYR-41; ILE-42; HIS-44; LYS-48 AND LYS-54</scope>
</reference>
<organism>
    <name type="scientific">Bacillus subtilis (strain 168)</name>
    <dbReference type="NCBI Taxonomy" id="224308"/>
    <lineage>
        <taxon>Bacteria</taxon>
        <taxon>Bacillati</taxon>
        <taxon>Bacillota</taxon>
        <taxon>Bacilli</taxon>
        <taxon>Bacillales</taxon>
        <taxon>Bacillaceae</taxon>
        <taxon>Bacillus</taxon>
    </lineage>
</organism>
<keyword id="KW-0178">Competence</keyword>
<keyword id="KW-0963">Cytoplasm</keyword>
<keyword id="KW-1185">Reference proteome</keyword>
<keyword id="KW-0964">Secreted</keyword>
<keyword id="KW-0749">Sporulation</keyword>
<proteinExistence type="evidence at protein level"/>
<accession>Q59HN7</accession>
<accession>O31508</accession>
<accession>P40771</accession>
<sequence>MPIKKKVMMCLAVTLVFGSMSFPTLTNSGGFKESTDRNTTYIDHSPYKLSDQKKALS</sequence>
<gene>
    <name type="primary">phrH</name>
    <name type="ordered locus">BSU06839</name>
</gene>